<feature type="chain" id="PRO_1000205943" description="3-hydroxyacyl-[acyl-carrier-protein] dehydratase FabZ">
    <location>
        <begin position="1"/>
        <end position="145"/>
    </location>
</feature>
<feature type="active site" evidence="1">
    <location>
        <position position="48"/>
    </location>
</feature>
<comment type="function">
    <text evidence="1">Involved in unsaturated fatty acids biosynthesis. Catalyzes the dehydration of short chain beta-hydroxyacyl-ACPs and long chain saturated and unsaturated beta-hydroxyacyl-ACPs.</text>
</comment>
<comment type="catalytic activity">
    <reaction evidence="1">
        <text>a (3R)-hydroxyacyl-[ACP] = a (2E)-enoyl-[ACP] + H2O</text>
        <dbReference type="Rhea" id="RHEA:13097"/>
        <dbReference type="Rhea" id="RHEA-COMP:9925"/>
        <dbReference type="Rhea" id="RHEA-COMP:9945"/>
        <dbReference type="ChEBI" id="CHEBI:15377"/>
        <dbReference type="ChEBI" id="CHEBI:78784"/>
        <dbReference type="ChEBI" id="CHEBI:78827"/>
        <dbReference type="EC" id="4.2.1.59"/>
    </reaction>
</comment>
<comment type="subcellular location">
    <subcellularLocation>
        <location evidence="1">Cytoplasm</location>
    </subcellularLocation>
</comment>
<comment type="similarity">
    <text evidence="1">Belongs to the thioester dehydratase family. FabZ subfamily.</text>
</comment>
<name>FABZ_GEOSW</name>
<organism>
    <name type="scientific">Geobacillus sp. (strain WCH70)</name>
    <dbReference type="NCBI Taxonomy" id="471223"/>
    <lineage>
        <taxon>Bacteria</taxon>
        <taxon>Bacillati</taxon>
        <taxon>Bacillota</taxon>
        <taxon>Bacilli</taxon>
        <taxon>Bacillales</taxon>
        <taxon>Anoxybacillaceae</taxon>
        <taxon>Geobacillus</taxon>
    </lineage>
</organism>
<accession>C5D965</accession>
<reference key="1">
    <citation type="submission" date="2009-06" db="EMBL/GenBank/DDBJ databases">
        <title>Complete sequence of chromosome of Geopacillus sp. WCH70.</title>
        <authorList>
            <consortium name="US DOE Joint Genome Institute"/>
            <person name="Lucas S."/>
            <person name="Copeland A."/>
            <person name="Lapidus A."/>
            <person name="Glavina del Rio T."/>
            <person name="Dalin E."/>
            <person name="Tice H."/>
            <person name="Bruce D."/>
            <person name="Goodwin L."/>
            <person name="Pitluck S."/>
            <person name="Chertkov O."/>
            <person name="Brettin T."/>
            <person name="Detter J.C."/>
            <person name="Han C."/>
            <person name="Larimer F."/>
            <person name="Land M."/>
            <person name="Hauser L."/>
            <person name="Kyrpides N."/>
            <person name="Mikhailova N."/>
            <person name="Brumm P."/>
            <person name="Mead D.A."/>
            <person name="Richardson P."/>
        </authorList>
    </citation>
    <scope>NUCLEOTIDE SEQUENCE [LARGE SCALE GENOMIC DNA]</scope>
    <source>
        <strain>WCH70</strain>
    </source>
</reference>
<evidence type="ECO:0000255" key="1">
    <source>
        <dbReference type="HAMAP-Rule" id="MF_00406"/>
    </source>
</evidence>
<keyword id="KW-0963">Cytoplasm</keyword>
<keyword id="KW-0441">Lipid A biosynthesis</keyword>
<keyword id="KW-0444">Lipid biosynthesis</keyword>
<keyword id="KW-0443">Lipid metabolism</keyword>
<keyword id="KW-0456">Lyase</keyword>
<gene>
    <name evidence="1" type="primary">fabZ</name>
    <name type="ordered locus">GWCH70_3278</name>
</gene>
<protein>
    <recommendedName>
        <fullName evidence="1">3-hydroxyacyl-[acyl-carrier-protein] dehydratase FabZ</fullName>
        <ecNumber evidence="1">4.2.1.59</ecNumber>
    </recommendedName>
    <alternativeName>
        <fullName evidence="1">(3R)-hydroxymyristoyl-[acyl-carrier-protein] dehydratase</fullName>
        <shortName evidence="1">(3R)-hydroxymyristoyl-ACP dehydrase</shortName>
    </alternativeName>
    <alternativeName>
        <fullName evidence="1">Beta-hydroxyacyl-ACP dehydratase</fullName>
    </alternativeName>
</protein>
<dbReference type="EC" id="4.2.1.59" evidence="1"/>
<dbReference type="EMBL" id="CP001638">
    <property type="protein sequence ID" value="ACS25918.1"/>
    <property type="molecule type" value="Genomic_DNA"/>
</dbReference>
<dbReference type="SMR" id="C5D965"/>
<dbReference type="STRING" id="471223.GWCH70_3278"/>
<dbReference type="KEGG" id="gwc:GWCH70_3278"/>
<dbReference type="eggNOG" id="COG0764">
    <property type="taxonomic scope" value="Bacteria"/>
</dbReference>
<dbReference type="HOGENOM" id="CLU_078912_3_0_9"/>
<dbReference type="OrthoDB" id="9772788at2"/>
<dbReference type="GO" id="GO:0005737">
    <property type="term" value="C:cytoplasm"/>
    <property type="evidence" value="ECO:0007669"/>
    <property type="project" value="UniProtKB-SubCell"/>
</dbReference>
<dbReference type="GO" id="GO:0016020">
    <property type="term" value="C:membrane"/>
    <property type="evidence" value="ECO:0007669"/>
    <property type="project" value="GOC"/>
</dbReference>
<dbReference type="GO" id="GO:0019171">
    <property type="term" value="F:(3R)-hydroxyacyl-[acyl-carrier-protein] dehydratase activity"/>
    <property type="evidence" value="ECO:0007669"/>
    <property type="project" value="UniProtKB-EC"/>
</dbReference>
<dbReference type="GO" id="GO:0006633">
    <property type="term" value="P:fatty acid biosynthetic process"/>
    <property type="evidence" value="ECO:0007669"/>
    <property type="project" value="UniProtKB-UniRule"/>
</dbReference>
<dbReference type="GO" id="GO:0009245">
    <property type="term" value="P:lipid A biosynthetic process"/>
    <property type="evidence" value="ECO:0007669"/>
    <property type="project" value="UniProtKB-UniRule"/>
</dbReference>
<dbReference type="CDD" id="cd01288">
    <property type="entry name" value="FabZ"/>
    <property type="match status" value="1"/>
</dbReference>
<dbReference type="FunFam" id="3.10.129.10:FF:000001">
    <property type="entry name" value="3-hydroxyacyl-[acyl-carrier-protein] dehydratase FabZ"/>
    <property type="match status" value="1"/>
</dbReference>
<dbReference type="Gene3D" id="3.10.129.10">
    <property type="entry name" value="Hotdog Thioesterase"/>
    <property type="match status" value="1"/>
</dbReference>
<dbReference type="HAMAP" id="MF_00406">
    <property type="entry name" value="FabZ"/>
    <property type="match status" value="1"/>
</dbReference>
<dbReference type="InterPro" id="IPR013114">
    <property type="entry name" value="FabA_FabZ"/>
</dbReference>
<dbReference type="InterPro" id="IPR010084">
    <property type="entry name" value="FabZ"/>
</dbReference>
<dbReference type="InterPro" id="IPR029069">
    <property type="entry name" value="HotDog_dom_sf"/>
</dbReference>
<dbReference type="NCBIfam" id="TIGR01750">
    <property type="entry name" value="fabZ"/>
    <property type="match status" value="1"/>
</dbReference>
<dbReference type="NCBIfam" id="NF000582">
    <property type="entry name" value="PRK00006.1"/>
    <property type="match status" value="1"/>
</dbReference>
<dbReference type="PANTHER" id="PTHR30272">
    <property type="entry name" value="3-HYDROXYACYL-[ACYL-CARRIER-PROTEIN] DEHYDRATASE"/>
    <property type="match status" value="1"/>
</dbReference>
<dbReference type="PANTHER" id="PTHR30272:SF1">
    <property type="entry name" value="3-HYDROXYACYL-[ACYL-CARRIER-PROTEIN] DEHYDRATASE"/>
    <property type="match status" value="1"/>
</dbReference>
<dbReference type="Pfam" id="PF07977">
    <property type="entry name" value="FabA"/>
    <property type="match status" value="1"/>
</dbReference>
<dbReference type="SUPFAM" id="SSF54637">
    <property type="entry name" value="Thioesterase/thiol ester dehydrase-isomerase"/>
    <property type="match status" value="1"/>
</dbReference>
<sequence>MLDIQQIQAIIPHRYPFLLVDRILEIEEGKRAVGIKNVSANESFFVGHFPEYPVMPGVLIVEALAQVGAVAMLKKEENRGRLAFFTGIDNCRFKKQVKPGDQLRLEVEIIRAKGPIGKGKGVATVDGELVCETEIMFALGDKKND</sequence>
<proteinExistence type="inferred from homology"/>